<name>MIAA_CROS5</name>
<protein>
    <recommendedName>
        <fullName evidence="1">tRNA dimethylallyltransferase</fullName>
        <ecNumber evidence="1">2.5.1.75</ecNumber>
    </recommendedName>
    <alternativeName>
        <fullName evidence="1">Dimethylallyl diphosphate:tRNA dimethylallyltransferase</fullName>
        <shortName evidence="1">DMAPP:tRNA dimethylallyltransferase</shortName>
        <shortName evidence="1">DMATase</shortName>
    </alternativeName>
    <alternativeName>
        <fullName evidence="1">Isopentenyl-diphosphate:tRNA isopentenyltransferase</fullName>
        <shortName evidence="1">IPP transferase</shortName>
        <shortName evidence="1">IPPT</shortName>
        <shortName evidence="1">IPTase</shortName>
    </alternativeName>
</protein>
<sequence>MSRGLIVICGATATGKTALALEIAQSLNSIIISADSRQVYREFDIGTAKPTPAEQDLIPHYLIDICDPRETLTLAEYQEKAQSLIDKNLTNFPLLVGGTGLYIKSIVKGLKIPRVAPQPRLRFQLEALGQQQCYQILQQVDTISSQKIHPNDQVRTLRALEVFYVTGIPISQQQGENPPTYPIVQIGLDCSTEELKRRIEIRTKKMLEMGFVEEVEKLVKKYGWELPLFKTLGYAEILNYLQGKLSLSEAEREIILHTRQFAKRQRTWFRAYPEIEWFDTTSPDLVENVFSKLTETLGLLN</sequence>
<proteinExistence type="inferred from homology"/>
<keyword id="KW-0067">ATP-binding</keyword>
<keyword id="KW-0460">Magnesium</keyword>
<keyword id="KW-0547">Nucleotide-binding</keyword>
<keyword id="KW-1185">Reference proteome</keyword>
<keyword id="KW-0808">Transferase</keyword>
<keyword id="KW-0819">tRNA processing</keyword>
<dbReference type="EC" id="2.5.1.75" evidence="1"/>
<dbReference type="EMBL" id="CP000806">
    <property type="protein sequence ID" value="ACB51221.1"/>
    <property type="molecule type" value="Genomic_DNA"/>
</dbReference>
<dbReference type="RefSeq" id="WP_009545682.1">
    <property type="nucleotide sequence ID" value="NC_010546.1"/>
</dbReference>
<dbReference type="SMR" id="B1X0D2"/>
<dbReference type="STRING" id="43989.cce_1871"/>
<dbReference type="KEGG" id="cyt:cce_1871"/>
<dbReference type="eggNOG" id="COG0324">
    <property type="taxonomic scope" value="Bacteria"/>
</dbReference>
<dbReference type="HOGENOM" id="CLU_032616_0_1_3"/>
<dbReference type="OrthoDB" id="9776390at2"/>
<dbReference type="Proteomes" id="UP000001203">
    <property type="component" value="Chromosome circular"/>
</dbReference>
<dbReference type="GO" id="GO:0005524">
    <property type="term" value="F:ATP binding"/>
    <property type="evidence" value="ECO:0007669"/>
    <property type="project" value="UniProtKB-UniRule"/>
</dbReference>
<dbReference type="GO" id="GO:0052381">
    <property type="term" value="F:tRNA dimethylallyltransferase activity"/>
    <property type="evidence" value="ECO:0007669"/>
    <property type="project" value="UniProtKB-UniRule"/>
</dbReference>
<dbReference type="GO" id="GO:0006400">
    <property type="term" value="P:tRNA modification"/>
    <property type="evidence" value="ECO:0007669"/>
    <property type="project" value="TreeGrafter"/>
</dbReference>
<dbReference type="Gene3D" id="1.10.20.140">
    <property type="match status" value="1"/>
</dbReference>
<dbReference type="Gene3D" id="3.40.50.300">
    <property type="entry name" value="P-loop containing nucleotide triphosphate hydrolases"/>
    <property type="match status" value="1"/>
</dbReference>
<dbReference type="HAMAP" id="MF_00185">
    <property type="entry name" value="IPP_trans"/>
    <property type="match status" value="1"/>
</dbReference>
<dbReference type="InterPro" id="IPR039657">
    <property type="entry name" value="Dimethylallyltransferase"/>
</dbReference>
<dbReference type="InterPro" id="IPR018022">
    <property type="entry name" value="IPT"/>
</dbReference>
<dbReference type="InterPro" id="IPR027417">
    <property type="entry name" value="P-loop_NTPase"/>
</dbReference>
<dbReference type="NCBIfam" id="TIGR00174">
    <property type="entry name" value="miaA"/>
    <property type="match status" value="1"/>
</dbReference>
<dbReference type="PANTHER" id="PTHR11088">
    <property type="entry name" value="TRNA DIMETHYLALLYLTRANSFERASE"/>
    <property type="match status" value="1"/>
</dbReference>
<dbReference type="PANTHER" id="PTHR11088:SF60">
    <property type="entry name" value="TRNA DIMETHYLALLYLTRANSFERASE"/>
    <property type="match status" value="1"/>
</dbReference>
<dbReference type="Pfam" id="PF01715">
    <property type="entry name" value="IPPT"/>
    <property type="match status" value="1"/>
</dbReference>
<dbReference type="SUPFAM" id="SSF52540">
    <property type="entry name" value="P-loop containing nucleoside triphosphate hydrolases"/>
    <property type="match status" value="2"/>
</dbReference>
<feature type="chain" id="PRO_0000377132" description="tRNA dimethylallyltransferase">
    <location>
        <begin position="1"/>
        <end position="301"/>
    </location>
</feature>
<feature type="region of interest" description="Interaction with substrate tRNA" evidence="1">
    <location>
        <begin position="35"/>
        <end position="38"/>
    </location>
</feature>
<feature type="binding site" evidence="1">
    <location>
        <begin position="10"/>
        <end position="17"/>
    </location>
    <ligand>
        <name>ATP</name>
        <dbReference type="ChEBI" id="CHEBI:30616"/>
    </ligand>
</feature>
<feature type="binding site" evidence="1">
    <location>
        <begin position="12"/>
        <end position="17"/>
    </location>
    <ligand>
        <name>substrate</name>
    </ligand>
</feature>
<feature type="site" description="Interaction with substrate tRNA" evidence="1">
    <location>
        <position position="99"/>
    </location>
</feature>
<comment type="function">
    <text evidence="1">Catalyzes the transfer of a dimethylallyl group onto the adenine at position 37 in tRNAs that read codons beginning with uridine, leading to the formation of N6-(dimethylallyl)adenosine (i(6)A).</text>
</comment>
<comment type="catalytic activity">
    <reaction evidence="1">
        <text>adenosine(37) in tRNA + dimethylallyl diphosphate = N(6)-dimethylallyladenosine(37) in tRNA + diphosphate</text>
        <dbReference type="Rhea" id="RHEA:26482"/>
        <dbReference type="Rhea" id="RHEA-COMP:10162"/>
        <dbReference type="Rhea" id="RHEA-COMP:10375"/>
        <dbReference type="ChEBI" id="CHEBI:33019"/>
        <dbReference type="ChEBI" id="CHEBI:57623"/>
        <dbReference type="ChEBI" id="CHEBI:74411"/>
        <dbReference type="ChEBI" id="CHEBI:74415"/>
        <dbReference type="EC" id="2.5.1.75"/>
    </reaction>
</comment>
<comment type="cofactor">
    <cofactor evidence="1">
        <name>Mg(2+)</name>
        <dbReference type="ChEBI" id="CHEBI:18420"/>
    </cofactor>
</comment>
<comment type="subunit">
    <text evidence="1">Monomer.</text>
</comment>
<comment type="similarity">
    <text evidence="1">Belongs to the IPP transferase family.</text>
</comment>
<organism>
    <name type="scientific">Crocosphaera subtropica (strain ATCC 51142 / BH68)</name>
    <name type="common">Cyanothece sp. (strain ATCC 51142)</name>
    <dbReference type="NCBI Taxonomy" id="43989"/>
    <lineage>
        <taxon>Bacteria</taxon>
        <taxon>Bacillati</taxon>
        <taxon>Cyanobacteriota</taxon>
        <taxon>Cyanophyceae</taxon>
        <taxon>Oscillatoriophycideae</taxon>
        <taxon>Chroococcales</taxon>
        <taxon>Aphanothecaceae</taxon>
        <taxon>Crocosphaera</taxon>
        <taxon>Crocosphaera subtropica</taxon>
    </lineage>
</organism>
<gene>
    <name evidence="1" type="primary">miaA</name>
    <name type="ordered locus">cce_1871</name>
</gene>
<accession>B1X0D2</accession>
<reference key="1">
    <citation type="journal article" date="2008" name="Proc. Natl. Acad. Sci. U.S.A.">
        <title>The genome of Cyanothece 51142, a unicellular diazotrophic cyanobacterium important in the marine nitrogen cycle.</title>
        <authorList>
            <person name="Welsh E.A."/>
            <person name="Liberton M."/>
            <person name="Stoeckel J."/>
            <person name="Loh T."/>
            <person name="Elvitigala T."/>
            <person name="Wang C."/>
            <person name="Wollam A."/>
            <person name="Fulton R.S."/>
            <person name="Clifton S.W."/>
            <person name="Jacobs J.M."/>
            <person name="Aurora R."/>
            <person name="Ghosh B.K."/>
            <person name="Sherman L.A."/>
            <person name="Smith R.D."/>
            <person name="Wilson R.K."/>
            <person name="Pakrasi H.B."/>
        </authorList>
    </citation>
    <scope>NUCLEOTIDE SEQUENCE [LARGE SCALE GENOMIC DNA]</scope>
    <source>
        <strain>ATCC 51142 / BH68</strain>
    </source>
</reference>
<evidence type="ECO:0000255" key="1">
    <source>
        <dbReference type="HAMAP-Rule" id="MF_00185"/>
    </source>
</evidence>